<gene>
    <name evidence="1" type="primary">lysS</name>
    <name type="ordered locus">A2cp1_1206</name>
</gene>
<proteinExistence type="inferred from homology"/>
<feature type="chain" id="PRO_1000125512" description="Lysine--tRNA ligase">
    <location>
        <begin position="1"/>
        <end position="513"/>
    </location>
</feature>
<feature type="binding site" evidence="1">
    <location>
        <position position="423"/>
    </location>
    <ligand>
        <name>Mg(2+)</name>
        <dbReference type="ChEBI" id="CHEBI:18420"/>
        <label>1</label>
    </ligand>
</feature>
<feature type="binding site" evidence="1">
    <location>
        <position position="430"/>
    </location>
    <ligand>
        <name>Mg(2+)</name>
        <dbReference type="ChEBI" id="CHEBI:18420"/>
        <label>1</label>
    </ligand>
</feature>
<feature type="binding site" evidence="1">
    <location>
        <position position="430"/>
    </location>
    <ligand>
        <name>Mg(2+)</name>
        <dbReference type="ChEBI" id="CHEBI:18420"/>
        <label>2</label>
    </ligand>
</feature>
<accession>B8JFW2</accession>
<organism>
    <name type="scientific">Anaeromyxobacter dehalogenans (strain 2CP-1 / ATCC BAA-258)</name>
    <dbReference type="NCBI Taxonomy" id="455488"/>
    <lineage>
        <taxon>Bacteria</taxon>
        <taxon>Pseudomonadati</taxon>
        <taxon>Myxococcota</taxon>
        <taxon>Myxococcia</taxon>
        <taxon>Myxococcales</taxon>
        <taxon>Cystobacterineae</taxon>
        <taxon>Anaeromyxobacteraceae</taxon>
        <taxon>Anaeromyxobacter</taxon>
    </lineage>
</organism>
<evidence type="ECO:0000255" key="1">
    <source>
        <dbReference type="HAMAP-Rule" id="MF_00252"/>
    </source>
</evidence>
<reference key="1">
    <citation type="submission" date="2009-01" db="EMBL/GenBank/DDBJ databases">
        <title>Complete sequence of Anaeromyxobacter dehalogenans 2CP-1.</title>
        <authorList>
            <person name="Lucas S."/>
            <person name="Copeland A."/>
            <person name="Lapidus A."/>
            <person name="Glavina del Rio T."/>
            <person name="Dalin E."/>
            <person name="Tice H."/>
            <person name="Bruce D."/>
            <person name="Goodwin L."/>
            <person name="Pitluck S."/>
            <person name="Saunders E."/>
            <person name="Brettin T."/>
            <person name="Detter J.C."/>
            <person name="Han C."/>
            <person name="Larimer F."/>
            <person name="Land M."/>
            <person name="Hauser L."/>
            <person name="Kyrpides N."/>
            <person name="Ovchinnikova G."/>
            <person name="Beliaev A.S."/>
            <person name="Richardson P."/>
        </authorList>
    </citation>
    <scope>NUCLEOTIDE SEQUENCE [LARGE SCALE GENOMIC DNA]</scope>
    <source>
        <strain>2CP-1 / ATCC BAA-258</strain>
    </source>
</reference>
<dbReference type="EC" id="6.1.1.6" evidence="1"/>
<dbReference type="EMBL" id="CP001359">
    <property type="protein sequence ID" value="ACL64550.1"/>
    <property type="molecule type" value="Genomic_DNA"/>
</dbReference>
<dbReference type="RefSeq" id="WP_012525196.1">
    <property type="nucleotide sequence ID" value="NC_011891.1"/>
</dbReference>
<dbReference type="SMR" id="B8JFW2"/>
<dbReference type="KEGG" id="acp:A2cp1_1206"/>
<dbReference type="HOGENOM" id="CLU_008255_6_0_7"/>
<dbReference type="Proteomes" id="UP000007089">
    <property type="component" value="Chromosome"/>
</dbReference>
<dbReference type="GO" id="GO:0005829">
    <property type="term" value="C:cytosol"/>
    <property type="evidence" value="ECO:0007669"/>
    <property type="project" value="TreeGrafter"/>
</dbReference>
<dbReference type="GO" id="GO:0005524">
    <property type="term" value="F:ATP binding"/>
    <property type="evidence" value="ECO:0007669"/>
    <property type="project" value="UniProtKB-UniRule"/>
</dbReference>
<dbReference type="GO" id="GO:0004824">
    <property type="term" value="F:lysine-tRNA ligase activity"/>
    <property type="evidence" value="ECO:0007669"/>
    <property type="project" value="UniProtKB-UniRule"/>
</dbReference>
<dbReference type="GO" id="GO:0000287">
    <property type="term" value="F:magnesium ion binding"/>
    <property type="evidence" value="ECO:0007669"/>
    <property type="project" value="UniProtKB-UniRule"/>
</dbReference>
<dbReference type="GO" id="GO:0000049">
    <property type="term" value="F:tRNA binding"/>
    <property type="evidence" value="ECO:0007669"/>
    <property type="project" value="TreeGrafter"/>
</dbReference>
<dbReference type="GO" id="GO:0006430">
    <property type="term" value="P:lysyl-tRNA aminoacylation"/>
    <property type="evidence" value="ECO:0007669"/>
    <property type="project" value="UniProtKB-UniRule"/>
</dbReference>
<dbReference type="CDD" id="cd00775">
    <property type="entry name" value="LysRS_core"/>
    <property type="match status" value="1"/>
</dbReference>
<dbReference type="CDD" id="cd04322">
    <property type="entry name" value="LysRS_N"/>
    <property type="match status" value="1"/>
</dbReference>
<dbReference type="FunFam" id="2.40.50.140:FF:000024">
    <property type="entry name" value="Lysine--tRNA ligase"/>
    <property type="match status" value="1"/>
</dbReference>
<dbReference type="Gene3D" id="3.30.930.10">
    <property type="entry name" value="Bira Bifunctional Protein, Domain 2"/>
    <property type="match status" value="1"/>
</dbReference>
<dbReference type="Gene3D" id="2.40.50.140">
    <property type="entry name" value="Nucleic acid-binding proteins"/>
    <property type="match status" value="1"/>
</dbReference>
<dbReference type="HAMAP" id="MF_00252">
    <property type="entry name" value="Lys_tRNA_synth_class2"/>
    <property type="match status" value="1"/>
</dbReference>
<dbReference type="InterPro" id="IPR004364">
    <property type="entry name" value="Aa-tRNA-synt_II"/>
</dbReference>
<dbReference type="InterPro" id="IPR006195">
    <property type="entry name" value="aa-tRNA-synth_II"/>
</dbReference>
<dbReference type="InterPro" id="IPR045864">
    <property type="entry name" value="aa-tRNA-synth_II/BPL/LPL"/>
</dbReference>
<dbReference type="InterPro" id="IPR002313">
    <property type="entry name" value="Lys-tRNA-ligase_II"/>
</dbReference>
<dbReference type="InterPro" id="IPR044136">
    <property type="entry name" value="Lys-tRNA-ligase_II_N"/>
</dbReference>
<dbReference type="InterPro" id="IPR018149">
    <property type="entry name" value="Lys-tRNA-synth_II_C"/>
</dbReference>
<dbReference type="InterPro" id="IPR012340">
    <property type="entry name" value="NA-bd_OB-fold"/>
</dbReference>
<dbReference type="InterPro" id="IPR004365">
    <property type="entry name" value="NA-bd_OB_tRNA"/>
</dbReference>
<dbReference type="NCBIfam" id="TIGR00499">
    <property type="entry name" value="lysS_bact"/>
    <property type="match status" value="1"/>
</dbReference>
<dbReference type="NCBIfam" id="NF001756">
    <property type="entry name" value="PRK00484.1"/>
    <property type="match status" value="1"/>
</dbReference>
<dbReference type="PANTHER" id="PTHR42918:SF15">
    <property type="entry name" value="LYSINE--TRNA LIGASE, CHLOROPLASTIC_MITOCHONDRIAL"/>
    <property type="match status" value="1"/>
</dbReference>
<dbReference type="PANTHER" id="PTHR42918">
    <property type="entry name" value="LYSYL-TRNA SYNTHETASE"/>
    <property type="match status" value="1"/>
</dbReference>
<dbReference type="Pfam" id="PF00152">
    <property type="entry name" value="tRNA-synt_2"/>
    <property type="match status" value="1"/>
</dbReference>
<dbReference type="Pfam" id="PF01336">
    <property type="entry name" value="tRNA_anti-codon"/>
    <property type="match status" value="1"/>
</dbReference>
<dbReference type="PRINTS" id="PR00982">
    <property type="entry name" value="TRNASYNTHLYS"/>
</dbReference>
<dbReference type="SUPFAM" id="SSF55681">
    <property type="entry name" value="Class II aaRS and biotin synthetases"/>
    <property type="match status" value="1"/>
</dbReference>
<dbReference type="SUPFAM" id="SSF50249">
    <property type="entry name" value="Nucleic acid-binding proteins"/>
    <property type="match status" value="1"/>
</dbReference>
<dbReference type="PROSITE" id="PS50862">
    <property type="entry name" value="AA_TRNA_LIGASE_II"/>
    <property type="match status" value="1"/>
</dbReference>
<keyword id="KW-0030">Aminoacyl-tRNA synthetase</keyword>
<keyword id="KW-0067">ATP-binding</keyword>
<keyword id="KW-0963">Cytoplasm</keyword>
<keyword id="KW-0436">Ligase</keyword>
<keyword id="KW-0460">Magnesium</keyword>
<keyword id="KW-0479">Metal-binding</keyword>
<keyword id="KW-0547">Nucleotide-binding</keyword>
<keyword id="KW-0648">Protein biosynthesis</keyword>
<name>SYK_ANAD2</name>
<sequence length="513" mass="57295">MADELGTTEREIIAQRLKKAEALRALGVNPFGNGWQPRHLADELLRHYGDQPAEEIAKDPGDWSLAGRVLAVRSFGKAAFLRVRDRSAELQVWVKKDRVGEQAFEVFKLLDIGDIVGAEGPATRTKTGELTLEARTFTILTKATRPLPEKWHGLTDVEQRYRQRYVDLVVTPGVREAFVKRARIVSGIRRFLDARGYLEVETPTLHKPEEAGGAAARPFETHHNALDLDLKLRIATELHLKRLVVGGLDRVYEIGRIWRNEGIDRRHNPEFTSIEFYQAYATHEDLMRLTEELMHRLAVEVTGGPVVTFQGQAIDLTPPFPRVSMLEVGARALGLSPDDALAGRGLAEALSRAAARENDSEDAWKLEQAAKKTPGEAVALAFEIFGEPQLPKDRPAFVVDFPLETSPLSRRRDADPRLVDRFELFAAGMELANAFSELNDPADQRARFEAQMRAKAAGDEEAMPYDEDFVRALEHGMPPTAGEGIGIDRLAMLFTDSASIRDVILFPLLKSRD</sequence>
<protein>
    <recommendedName>
        <fullName evidence="1">Lysine--tRNA ligase</fullName>
        <ecNumber evidence="1">6.1.1.6</ecNumber>
    </recommendedName>
    <alternativeName>
        <fullName evidence="1">Lysyl-tRNA synthetase</fullName>
        <shortName evidence="1">LysRS</shortName>
    </alternativeName>
</protein>
<comment type="catalytic activity">
    <reaction evidence="1">
        <text>tRNA(Lys) + L-lysine + ATP = L-lysyl-tRNA(Lys) + AMP + diphosphate</text>
        <dbReference type="Rhea" id="RHEA:20792"/>
        <dbReference type="Rhea" id="RHEA-COMP:9696"/>
        <dbReference type="Rhea" id="RHEA-COMP:9697"/>
        <dbReference type="ChEBI" id="CHEBI:30616"/>
        <dbReference type="ChEBI" id="CHEBI:32551"/>
        <dbReference type="ChEBI" id="CHEBI:33019"/>
        <dbReference type="ChEBI" id="CHEBI:78442"/>
        <dbReference type="ChEBI" id="CHEBI:78529"/>
        <dbReference type="ChEBI" id="CHEBI:456215"/>
        <dbReference type="EC" id="6.1.1.6"/>
    </reaction>
</comment>
<comment type="cofactor">
    <cofactor evidence="1">
        <name>Mg(2+)</name>
        <dbReference type="ChEBI" id="CHEBI:18420"/>
    </cofactor>
    <text evidence="1">Binds 3 Mg(2+) ions per subunit.</text>
</comment>
<comment type="subunit">
    <text evidence="1">Homodimer.</text>
</comment>
<comment type="subcellular location">
    <subcellularLocation>
        <location evidence="1">Cytoplasm</location>
    </subcellularLocation>
</comment>
<comment type="similarity">
    <text evidence="1">Belongs to the class-II aminoacyl-tRNA synthetase family.</text>
</comment>